<keyword id="KW-0007">Acetylation</keyword>
<keyword id="KW-0963">Cytoplasm</keyword>
<keyword id="KW-1185">Reference proteome</keyword>
<keyword id="KW-0687">Ribonucleoprotein</keyword>
<keyword id="KW-0689">Ribosomal protein</keyword>
<feature type="chain" id="PRO_0000265740" description="Large ribosomal subunit protein uL6">
    <location>
        <begin position="1"/>
        <end position="192"/>
    </location>
</feature>
<feature type="modified residue" description="N6-acetyllysine" evidence="1">
    <location>
        <position position="121"/>
    </location>
</feature>
<organism>
    <name type="scientific">Pongo abelii</name>
    <name type="common">Sumatran orangutan</name>
    <name type="synonym">Pongo pygmaeus abelii</name>
    <dbReference type="NCBI Taxonomy" id="9601"/>
    <lineage>
        <taxon>Eukaryota</taxon>
        <taxon>Metazoa</taxon>
        <taxon>Chordata</taxon>
        <taxon>Craniata</taxon>
        <taxon>Vertebrata</taxon>
        <taxon>Euteleostomi</taxon>
        <taxon>Mammalia</taxon>
        <taxon>Eutheria</taxon>
        <taxon>Euarchontoglires</taxon>
        <taxon>Primates</taxon>
        <taxon>Haplorrhini</taxon>
        <taxon>Catarrhini</taxon>
        <taxon>Hominidae</taxon>
        <taxon>Pongo</taxon>
    </lineage>
</organism>
<accession>Q5R9Q7</accession>
<protein>
    <recommendedName>
        <fullName evidence="2">Large ribosomal subunit protein uL6</fullName>
    </recommendedName>
    <alternativeName>
        <fullName>60S ribosomal protein L9</fullName>
    </alternativeName>
</protein>
<evidence type="ECO:0000250" key="1">
    <source>
        <dbReference type="UniProtKB" id="P32969"/>
    </source>
</evidence>
<evidence type="ECO:0000305" key="2"/>
<sequence>MKTILSNQTVDIPENVDITLKGRTVIVKGPRGTLRRDFNHINVELSLLGKKKKRLRVDEWWGNRKELATVRTICSHVQNMIKGVTLGFRYKMRSVYAHFPINVVIQENGSLVEIRNFLGEKYIRRVRMRPGVACSVSQAQKDELILGGNDIELVSNSAALIQQATTVKNKDIRKFLDGIYVSEKGTVQQADE</sequence>
<gene>
    <name type="primary">RPL9</name>
</gene>
<reference key="1">
    <citation type="submission" date="2004-11" db="EMBL/GenBank/DDBJ databases">
        <authorList>
            <consortium name="The German cDNA consortium"/>
        </authorList>
    </citation>
    <scope>NUCLEOTIDE SEQUENCE [LARGE SCALE MRNA]</scope>
    <source>
        <tissue>Heart</tissue>
    </source>
</reference>
<dbReference type="EMBL" id="CR859325">
    <property type="protein sequence ID" value="CAH91503.1"/>
    <property type="molecule type" value="mRNA"/>
</dbReference>
<dbReference type="RefSeq" id="NP_001125884.1">
    <property type="nucleotide sequence ID" value="NM_001132412.1"/>
</dbReference>
<dbReference type="SMR" id="Q5R9Q7"/>
<dbReference type="STRING" id="9601.ENSPPYP00000016394"/>
<dbReference type="GeneID" id="100172816"/>
<dbReference type="KEGG" id="pon:100172816"/>
<dbReference type="CTD" id="6133"/>
<dbReference type="eggNOG" id="KOG3255">
    <property type="taxonomic scope" value="Eukaryota"/>
</dbReference>
<dbReference type="InParanoid" id="Q5R9Q7"/>
<dbReference type="OrthoDB" id="10252633at2759"/>
<dbReference type="Proteomes" id="UP000001595">
    <property type="component" value="Unplaced"/>
</dbReference>
<dbReference type="GO" id="GO:0022625">
    <property type="term" value="C:cytosolic large ribosomal subunit"/>
    <property type="evidence" value="ECO:0007669"/>
    <property type="project" value="TreeGrafter"/>
</dbReference>
<dbReference type="GO" id="GO:0019843">
    <property type="term" value="F:rRNA binding"/>
    <property type="evidence" value="ECO:0007669"/>
    <property type="project" value="InterPro"/>
</dbReference>
<dbReference type="GO" id="GO:0003735">
    <property type="term" value="F:structural constituent of ribosome"/>
    <property type="evidence" value="ECO:0007669"/>
    <property type="project" value="InterPro"/>
</dbReference>
<dbReference type="GO" id="GO:0002181">
    <property type="term" value="P:cytoplasmic translation"/>
    <property type="evidence" value="ECO:0007669"/>
    <property type="project" value="TreeGrafter"/>
</dbReference>
<dbReference type="FunFam" id="3.90.930.12:FF:000003">
    <property type="entry name" value="60S ribosomal protein L9"/>
    <property type="match status" value="1"/>
</dbReference>
<dbReference type="FunFam" id="3.90.930.12:FF:000005">
    <property type="entry name" value="60S ribosomal protein L9"/>
    <property type="match status" value="1"/>
</dbReference>
<dbReference type="Gene3D" id="3.90.930.12">
    <property type="entry name" value="Ribosomal protein L6, alpha-beta domain"/>
    <property type="match status" value="2"/>
</dbReference>
<dbReference type="InterPro" id="IPR000702">
    <property type="entry name" value="Ribosomal_uL6-like"/>
</dbReference>
<dbReference type="InterPro" id="IPR036789">
    <property type="entry name" value="Ribosomal_uL6-like_a/b-dom_sf"/>
</dbReference>
<dbReference type="InterPro" id="IPR020040">
    <property type="entry name" value="Ribosomal_uL6_a/b-dom"/>
</dbReference>
<dbReference type="InterPro" id="IPR002359">
    <property type="entry name" value="Ribosomal_uL6_CS2"/>
</dbReference>
<dbReference type="PANTHER" id="PTHR11655">
    <property type="entry name" value="60S/50S RIBOSOMAL PROTEIN L6/L9"/>
    <property type="match status" value="1"/>
</dbReference>
<dbReference type="PANTHER" id="PTHR11655:SF46">
    <property type="entry name" value="LARGE RIBOSOMAL SUBUNIT PROTEIN UL6"/>
    <property type="match status" value="1"/>
</dbReference>
<dbReference type="Pfam" id="PF00347">
    <property type="entry name" value="Ribosomal_L6"/>
    <property type="match status" value="2"/>
</dbReference>
<dbReference type="PIRSF" id="PIRSF002162">
    <property type="entry name" value="Ribosomal_L6"/>
    <property type="match status" value="1"/>
</dbReference>
<dbReference type="SUPFAM" id="SSF56053">
    <property type="entry name" value="Ribosomal protein L6"/>
    <property type="match status" value="2"/>
</dbReference>
<dbReference type="PROSITE" id="PS00700">
    <property type="entry name" value="RIBOSOMAL_L6_2"/>
    <property type="match status" value="1"/>
</dbReference>
<proteinExistence type="evidence at transcript level"/>
<name>RL9_PONAB</name>
<comment type="function">
    <text evidence="1">Component of the large ribosomal subunit. The ribosome is a large ribonucleoprotein complex responsible for the synthesis of proteins in the cell.</text>
</comment>
<comment type="subunit">
    <text evidence="1">Component of the large ribosomal subunit.</text>
</comment>
<comment type="subcellular location">
    <subcellularLocation>
        <location evidence="1">Cytoplasm</location>
    </subcellularLocation>
</comment>
<comment type="similarity">
    <text evidence="2">Belongs to the universal ribosomal protein uL6 family.</text>
</comment>